<feature type="chain" id="PRO_0000382446" description="Uncharacterized protein BTRF1">
    <location>
        <begin position="1"/>
        <end position="404"/>
    </location>
</feature>
<accession>P0C734</accession>
<protein>
    <recommendedName>
        <fullName>Uncharacterized protein BTRF1</fullName>
    </recommendedName>
</protein>
<gene>
    <name type="ORF">BTRF1</name>
</gene>
<reference key="1">
    <citation type="journal article" date="2005" name="J. Virol.">
        <title>Genomic sequence analysis of Epstein-Barr virus strain GD1 from a nasopharyngeal carcinoma patient.</title>
        <authorList>
            <person name="Zeng M.-S."/>
            <person name="Li D.-J."/>
            <person name="Liu Q.-L."/>
            <person name="Song L.-B."/>
            <person name="Li M.-Z."/>
            <person name="Zhang R.-H."/>
            <person name="Yu X.-J."/>
            <person name="Wang H.-M."/>
            <person name="Ernberg I."/>
            <person name="Zeng Y.-X."/>
        </authorList>
    </citation>
    <scope>NUCLEOTIDE SEQUENCE [LARGE SCALE GENOMIC DNA]</scope>
</reference>
<organism>
    <name type="scientific">Epstein-Barr virus (strain GD1)</name>
    <name type="common">HHV-4</name>
    <name type="synonym">Human gammaherpesvirus 4</name>
    <dbReference type="NCBI Taxonomy" id="10376"/>
    <lineage>
        <taxon>Viruses</taxon>
        <taxon>Duplodnaviria</taxon>
        <taxon>Heunggongvirae</taxon>
        <taxon>Peploviricota</taxon>
        <taxon>Herviviricetes</taxon>
        <taxon>Herpesvirales</taxon>
        <taxon>Orthoherpesviridae</taxon>
        <taxon>Gammaherpesvirinae</taxon>
        <taxon>Lymphocryptovirus</taxon>
        <taxon>Lymphocryptovirus humangamma4</taxon>
    </lineage>
</organism>
<organismHost>
    <name type="scientific">Homo sapiens</name>
    <name type="common">Human</name>
    <dbReference type="NCBI Taxonomy" id="9606"/>
</organismHost>
<sequence length="404" mass="44344">MLKCKQPGARFIHGAVHLPSGQIVFHTIHSPTLASALGLPGENVPIPALFRASGLNVRESLPMTNMRAPIISLARLILAPNPYILEGQLTVGMTQDNGIPVLFARPVIEVKSGPESNIKASSQLMIAEDSCLNQIAPFSASEHPAFSMVESVKRVRVDEGANTRRTIRDILEIPVTVLSSLQLSPTKSILKKAPEPPPPEPQATFDATPYARIFYDIGRQVPKLGNAPAAQVSNVLIANRSHNSLRLVPNPDLLPLQHLYLKHVVLKSLNLENIVQDFEAIFTSPSDTISEAETKAFEKLVEQAKNTVENIVFCLNSICSTSTLPDVVPDVNNPNISLALEKYFLMFPPSGTIMRNVRFATPIVRLLCQGAELGTMAQFLGKYIKVKKETGMYTLVKLYYLLRI</sequence>
<dbReference type="EMBL" id="AY961628">
    <property type="status" value="NOT_ANNOTATED_CDS"/>
    <property type="molecule type" value="Genomic_DNA"/>
</dbReference>
<dbReference type="RefSeq" id="YP_401699.3">
    <property type="nucleotide sequence ID" value="NC_007605.1"/>
</dbReference>
<dbReference type="IntAct" id="P0C734">
    <property type="interactions" value="2"/>
</dbReference>
<dbReference type="GeneID" id="3783770"/>
<dbReference type="Proteomes" id="UP000007641">
    <property type="component" value="Genome"/>
</dbReference>
<dbReference type="InterPro" id="IPR006772">
    <property type="entry name" value="Herpes_BTRF1"/>
</dbReference>
<dbReference type="Pfam" id="PF04682">
    <property type="entry name" value="Herpes_BTRF1"/>
    <property type="match status" value="1"/>
</dbReference>
<proteinExistence type="evidence at protein level"/>
<evidence type="ECO:0000305" key="1"/>
<name>BTRF1_EBVG</name>
<comment type="interaction">
    <interactant intactId="EBI-2621388">
        <id>P0C734</id>
    </interactant>
    <interactant intactId="EBI-2621381">
        <id>P0C6Z5</id>
        <label>BZLF2</label>
    </interactant>
    <organismsDiffer>false</organismsDiffer>
    <experiments>2</experiments>
</comment>
<comment type="similarity">
    <text evidence="1">Belongs to the lymphocryptovirus BTRF1 family.</text>
</comment>